<feature type="chain" id="PRO_0000188644" description="Glycogen synthase">
    <location>
        <begin position="1"/>
        <end position="477"/>
    </location>
</feature>
<feature type="binding site" evidence="1">
    <location>
        <position position="15"/>
    </location>
    <ligand>
        <name>ADP-alpha-D-glucose</name>
        <dbReference type="ChEBI" id="CHEBI:57498"/>
    </ligand>
</feature>
<feature type="sequence conflict" description="In Ref. 2; AAA27133." evidence="2" ref="2">
    <original>A</original>
    <variation>R</variation>
    <location>
        <position position="29"/>
    </location>
</feature>
<dbReference type="EC" id="2.4.1.21"/>
<dbReference type="EMBL" id="AE006468">
    <property type="protein sequence ID" value="AAL22395.1"/>
    <property type="molecule type" value="Genomic_DNA"/>
</dbReference>
<dbReference type="EMBL" id="M17363">
    <property type="protein sequence ID" value="AAA27133.1"/>
    <property type="molecule type" value="Genomic_DNA"/>
</dbReference>
<dbReference type="RefSeq" id="NP_462436.1">
    <property type="nucleotide sequence ID" value="NC_003197.2"/>
</dbReference>
<dbReference type="RefSeq" id="WP_001197669.1">
    <property type="nucleotide sequence ID" value="NC_003197.2"/>
</dbReference>
<dbReference type="SMR" id="P05416"/>
<dbReference type="STRING" id="99287.STM3535"/>
<dbReference type="CAZy" id="GT5">
    <property type="family name" value="Glycosyltransferase Family 5"/>
</dbReference>
<dbReference type="PaxDb" id="99287-STM3535"/>
<dbReference type="GeneID" id="1255058"/>
<dbReference type="KEGG" id="stm:STM3535"/>
<dbReference type="PATRIC" id="fig|99287.12.peg.3737"/>
<dbReference type="HOGENOM" id="CLU_009583_18_4_6"/>
<dbReference type="OMA" id="TWCPWYM"/>
<dbReference type="PhylomeDB" id="P05416"/>
<dbReference type="BioCyc" id="SENT99287:STM3535-MONOMER"/>
<dbReference type="UniPathway" id="UPA00164"/>
<dbReference type="PHI-base" id="PHI:10051"/>
<dbReference type="Proteomes" id="UP000001014">
    <property type="component" value="Chromosome"/>
</dbReference>
<dbReference type="GO" id="GO:0005829">
    <property type="term" value="C:cytosol"/>
    <property type="evidence" value="ECO:0000318"/>
    <property type="project" value="GO_Central"/>
</dbReference>
<dbReference type="GO" id="GO:0009011">
    <property type="term" value="F:alpha-1,4-glucan glucosyltransferase (ADP-glucose donor) activity"/>
    <property type="evidence" value="ECO:0007669"/>
    <property type="project" value="UniProtKB-UniRule"/>
</dbReference>
<dbReference type="GO" id="GO:0004373">
    <property type="term" value="F:alpha-1,4-glucan glucosyltransferase (UDP-glucose donor) activity"/>
    <property type="evidence" value="ECO:0007669"/>
    <property type="project" value="InterPro"/>
</dbReference>
<dbReference type="GO" id="GO:0005978">
    <property type="term" value="P:glycogen biosynthetic process"/>
    <property type="evidence" value="ECO:0000318"/>
    <property type="project" value="GO_Central"/>
</dbReference>
<dbReference type="CDD" id="cd03791">
    <property type="entry name" value="GT5_Glycogen_synthase_DULL1-like"/>
    <property type="match status" value="1"/>
</dbReference>
<dbReference type="FunFam" id="3.40.50.2000:FF:000008">
    <property type="entry name" value="Glycogen synthase"/>
    <property type="match status" value="1"/>
</dbReference>
<dbReference type="FunFam" id="3.40.50.2000:FF:000011">
    <property type="entry name" value="Glycogen synthase"/>
    <property type="match status" value="1"/>
</dbReference>
<dbReference type="Gene3D" id="3.40.50.2000">
    <property type="entry name" value="Glycogen Phosphorylase B"/>
    <property type="match status" value="2"/>
</dbReference>
<dbReference type="HAMAP" id="MF_00484">
    <property type="entry name" value="Glycogen_synth"/>
    <property type="match status" value="1"/>
</dbReference>
<dbReference type="InterPro" id="IPR001296">
    <property type="entry name" value="Glyco_trans_1"/>
</dbReference>
<dbReference type="InterPro" id="IPR011835">
    <property type="entry name" value="GS/SS"/>
</dbReference>
<dbReference type="InterPro" id="IPR013534">
    <property type="entry name" value="Starch_synth_cat_dom"/>
</dbReference>
<dbReference type="NCBIfam" id="TIGR02095">
    <property type="entry name" value="glgA"/>
    <property type="match status" value="1"/>
</dbReference>
<dbReference type="NCBIfam" id="NF001899">
    <property type="entry name" value="PRK00654.1-2"/>
    <property type="match status" value="1"/>
</dbReference>
<dbReference type="PANTHER" id="PTHR45825:SF11">
    <property type="entry name" value="ALPHA AMYLASE DOMAIN-CONTAINING PROTEIN"/>
    <property type="match status" value="1"/>
</dbReference>
<dbReference type="PANTHER" id="PTHR45825">
    <property type="entry name" value="GRANULE-BOUND STARCH SYNTHASE 1, CHLOROPLASTIC/AMYLOPLASTIC"/>
    <property type="match status" value="1"/>
</dbReference>
<dbReference type="Pfam" id="PF08323">
    <property type="entry name" value="Glyco_transf_5"/>
    <property type="match status" value="1"/>
</dbReference>
<dbReference type="Pfam" id="PF00534">
    <property type="entry name" value="Glycos_transf_1"/>
    <property type="match status" value="1"/>
</dbReference>
<dbReference type="SUPFAM" id="SSF53756">
    <property type="entry name" value="UDP-Glycosyltransferase/glycogen phosphorylase"/>
    <property type="match status" value="1"/>
</dbReference>
<keyword id="KW-0320">Glycogen biosynthesis</keyword>
<keyword id="KW-0328">Glycosyltransferase</keyword>
<keyword id="KW-1185">Reference proteome</keyword>
<keyword id="KW-0808">Transferase</keyword>
<protein>
    <recommendedName>
        <fullName>Glycogen synthase</fullName>
        <ecNumber>2.4.1.21</ecNumber>
    </recommendedName>
    <alternativeName>
        <fullName>Starch [bacterial glycogen] synthase</fullName>
    </alternativeName>
</protein>
<gene>
    <name type="primary">glgA</name>
    <name type="ordered locus">STM3535</name>
</gene>
<sequence length="477" mass="52946">MQVLHVCSEMFPLLKTGGLADVIGALPAAQIADGVDVRVLLPGFPDIRRGIPDAHVVSRRDTFAGKISLLFGHYNGVGIYLIDAPHLYERPGSPYHDTNLYAYTDNVLRFALLGWVGCEMACGLDPFWRPDVVHAHDWHAGLAPAYLAARGRPAKSVFTVHNLAYQGMFYAKHMDDIELPWSFFNMHGLEFNGQLSFLKAGLYYADHITAVSPTYAREITEPQFAYGMEGLLRQRHLEGRLSGILNGVDEKIWNPESDLLLASRYTRDTLEEKAENKRQLQIAMGLKVNDKVPLFAVVSRLTNQKGLDLVLEALPGLLEQGGQLALLGAGDPVLQEGFLAAAAEHPGQVGVQIGYHEAFSHRIMGGADVILVPSRFEPCGLTQLYGLKYGTLPLVRRTGGLADTVSDSSLENLADGIASGFVFEDSNAWSLLRAIRRAFVLWSRPSLWRFVQRQAMAMDFSWQVAAKSYRELYYRLK</sequence>
<evidence type="ECO:0000250" key="1"/>
<evidence type="ECO:0000305" key="2"/>
<reference key="1">
    <citation type="journal article" date="2001" name="Nature">
        <title>Complete genome sequence of Salmonella enterica serovar Typhimurium LT2.</title>
        <authorList>
            <person name="McClelland M."/>
            <person name="Sanderson K.E."/>
            <person name="Spieth J."/>
            <person name="Clifton S.W."/>
            <person name="Latreille P."/>
            <person name="Courtney L."/>
            <person name="Porwollik S."/>
            <person name="Ali J."/>
            <person name="Dante M."/>
            <person name="Du F."/>
            <person name="Hou S."/>
            <person name="Layman D."/>
            <person name="Leonard S."/>
            <person name="Nguyen C."/>
            <person name="Scott K."/>
            <person name="Holmes A."/>
            <person name="Grewal N."/>
            <person name="Mulvaney E."/>
            <person name="Ryan E."/>
            <person name="Sun H."/>
            <person name="Florea L."/>
            <person name="Miller W."/>
            <person name="Stoneking T."/>
            <person name="Nhan M."/>
            <person name="Waterston R."/>
            <person name="Wilson R.K."/>
        </authorList>
    </citation>
    <scope>NUCLEOTIDE SEQUENCE [LARGE SCALE GENOMIC DNA]</scope>
    <source>
        <strain>LT2 / SGSC1412 / ATCC 700720</strain>
    </source>
</reference>
<reference key="2">
    <citation type="journal article" date="1987" name="J. Bacteriol.">
        <title>Biosynthesis of bacterial glycogen: primary structure of Salmonella typhimurium ADPglucose synthetase as deduced from the nucleotide sequence of the glgC gene.</title>
        <authorList>
            <person name="Leung P.S.C."/>
            <person name="Preiss J."/>
        </authorList>
    </citation>
    <scope>NUCLEOTIDE SEQUENCE [GENOMIC DNA] OF 1-29</scope>
</reference>
<proteinExistence type="inferred from homology"/>
<organism>
    <name type="scientific">Salmonella typhimurium (strain LT2 / SGSC1412 / ATCC 700720)</name>
    <dbReference type="NCBI Taxonomy" id="99287"/>
    <lineage>
        <taxon>Bacteria</taxon>
        <taxon>Pseudomonadati</taxon>
        <taxon>Pseudomonadota</taxon>
        <taxon>Gammaproteobacteria</taxon>
        <taxon>Enterobacterales</taxon>
        <taxon>Enterobacteriaceae</taxon>
        <taxon>Salmonella</taxon>
    </lineage>
</organism>
<name>GLGA_SALTY</name>
<comment type="function">
    <text>Synthesizes alpha-1,4-glucan chains using ADP-glucose.</text>
</comment>
<comment type="catalytic activity">
    <reaction>
        <text>[(1-&gt;4)-alpha-D-glucosyl](n) + ADP-alpha-D-glucose = [(1-&gt;4)-alpha-D-glucosyl](n+1) + ADP + H(+)</text>
        <dbReference type="Rhea" id="RHEA:18189"/>
        <dbReference type="Rhea" id="RHEA-COMP:9584"/>
        <dbReference type="Rhea" id="RHEA-COMP:9587"/>
        <dbReference type="ChEBI" id="CHEBI:15378"/>
        <dbReference type="ChEBI" id="CHEBI:15444"/>
        <dbReference type="ChEBI" id="CHEBI:57498"/>
        <dbReference type="ChEBI" id="CHEBI:456216"/>
        <dbReference type="EC" id="2.4.1.21"/>
    </reaction>
</comment>
<comment type="pathway">
    <text>Glycan biosynthesis; glycogen biosynthesis.</text>
</comment>
<comment type="similarity">
    <text evidence="2">Belongs to the glycosyltransferase 1 family. Bacterial/plant glycogen synthase subfamily.</text>
</comment>
<accession>P05416</accession>